<accession>B8I784</accession>
<sequence>MPRPKKCRRVGFIPGNACFHPEIKSQVQVVLSIEEVEAIRLADYLAIGQDGAAESMNISRGTFQRIINSARKKMADALIHGKTIRIDGGNYQVESGRSCCRRQSGECRTVNCDRCTGCMDCHKSTNI</sequence>
<gene>
    <name type="ordered locus">Ccel_0627</name>
</gene>
<keyword id="KW-1185">Reference proteome</keyword>
<evidence type="ECO:0000255" key="1">
    <source>
        <dbReference type="HAMAP-Rule" id="MF_00674"/>
    </source>
</evidence>
<feature type="chain" id="PRO_1000147682" description="UPF0251 protein Ccel_0627">
    <location>
        <begin position="1"/>
        <end position="127"/>
    </location>
</feature>
<name>Y627_RUMCH</name>
<reference key="1">
    <citation type="submission" date="2009-01" db="EMBL/GenBank/DDBJ databases">
        <title>Complete sequence of Clostridium cellulolyticum H10.</title>
        <authorList>
            <consortium name="US DOE Joint Genome Institute"/>
            <person name="Lucas S."/>
            <person name="Copeland A."/>
            <person name="Lapidus A."/>
            <person name="Glavina del Rio T."/>
            <person name="Dalin E."/>
            <person name="Tice H."/>
            <person name="Bruce D."/>
            <person name="Goodwin L."/>
            <person name="Pitluck S."/>
            <person name="Chertkov O."/>
            <person name="Saunders E."/>
            <person name="Brettin T."/>
            <person name="Detter J.C."/>
            <person name="Han C."/>
            <person name="Larimer F."/>
            <person name="Land M."/>
            <person name="Hauser L."/>
            <person name="Kyrpides N."/>
            <person name="Ivanova N."/>
            <person name="Zhou J."/>
            <person name="Richardson P."/>
        </authorList>
    </citation>
    <scope>NUCLEOTIDE SEQUENCE [LARGE SCALE GENOMIC DNA]</scope>
    <source>
        <strain>ATCC 35319 / DSM 5812 / JCM 6584 / H10</strain>
    </source>
</reference>
<proteinExistence type="inferred from homology"/>
<comment type="similarity">
    <text evidence="1">Belongs to the UPF0251 family.</text>
</comment>
<organism>
    <name type="scientific">Ruminiclostridium cellulolyticum (strain ATCC 35319 / DSM 5812 / JCM 6584 / H10)</name>
    <name type="common">Clostridium cellulolyticum</name>
    <dbReference type="NCBI Taxonomy" id="394503"/>
    <lineage>
        <taxon>Bacteria</taxon>
        <taxon>Bacillati</taxon>
        <taxon>Bacillota</taxon>
        <taxon>Clostridia</taxon>
        <taxon>Eubacteriales</taxon>
        <taxon>Oscillospiraceae</taxon>
        <taxon>Ruminiclostridium</taxon>
    </lineage>
</organism>
<protein>
    <recommendedName>
        <fullName evidence="1">UPF0251 protein Ccel_0627</fullName>
    </recommendedName>
</protein>
<dbReference type="EMBL" id="CP001348">
    <property type="protein sequence ID" value="ACL75008.1"/>
    <property type="molecule type" value="Genomic_DNA"/>
</dbReference>
<dbReference type="RefSeq" id="WP_015924177.1">
    <property type="nucleotide sequence ID" value="NC_011898.1"/>
</dbReference>
<dbReference type="STRING" id="394503.Ccel_0627"/>
<dbReference type="KEGG" id="cce:Ccel_0627"/>
<dbReference type="eggNOG" id="COG1342">
    <property type="taxonomic scope" value="Bacteria"/>
</dbReference>
<dbReference type="HOGENOM" id="CLU_094511_1_0_9"/>
<dbReference type="OrthoDB" id="280278at2"/>
<dbReference type="Proteomes" id="UP000001349">
    <property type="component" value="Chromosome"/>
</dbReference>
<dbReference type="HAMAP" id="MF_00674">
    <property type="entry name" value="UPF0251"/>
    <property type="match status" value="1"/>
</dbReference>
<dbReference type="InterPro" id="IPR002852">
    <property type="entry name" value="UPF0251"/>
</dbReference>
<dbReference type="PANTHER" id="PTHR37478">
    <property type="match status" value="1"/>
</dbReference>
<dbReference type="PANTHER" id="PTHR37478:SF2">
    <property type="entry name" value="UPF0251 PROTEIN TK0562"/>
    <property type="match status" value="1"/>
</dbReference>
<dbReference type="Pfam" id="PF02001">
    <property type="entry name" value="DUF134"/>
    <property type="match status" value="1"/>
</dbReference>